<organism>
    <name type="scientific">Hypocrea jecorina</name>
    <name type="common">Trichoderma reesei</name>
    <dbReference type="NCBI Taxonomy" id="51453"/>
    <lineage>
        <taxon>Eukaryota</taxon>
        <taxon>Fungi</taxon>
        <taxon>Dikarya</taxon>
        <taxon>Ascomycota</taxon>
        <taxon>Pezizomycotina</taxon>
        <taxon>Sordariomycetes</taxon>
        <taxon>Hypocreomycetidae</taxon>
        <taxon>Hypocreales</taxon>
        <taxon>Hypocreaceae</taxon>
        <taxon>Trichoderma</taxon>
    </lineage>
</organism>
<reference key="1">
    <citation type="journal article" date="1996" name="Eur. J. Biochem.">
        <title>Acetyl xylan esterase from Trichoderma reesei contains an active-site serine residue and a cellulose-binding domain.</title>
        <authorList>
            <person name="Margolles-Clark E."/>
            <person name="Tenkanen M."/>
            <person name="Soederlund H."/>
            <person name="Penttilae M."/>
        </authorList>
    </citation>
    <scope>NUCLEOTIDE SEQUENCE [MRNA]</scope>
    <scope>PROTEIN SEQUENCE OF 158-186</scope>
    <scope>CHARACTERIZATION</scope>
    <source>
        <strain>ATCC 56765 / Rut C-30</strain>
    </source>
</reference>
<reference key="2">
    <citation type="journal article" date="1990" name="Appl. Microbiol. Biotechnol.">
        <title>Deacetylation of xylans by acetyl esterases of Trichoderma reesei.</title>
        <authorList>
            <person name="Poutanen K."/>
            <person name="Sundberg M."/>
            <person name="Korte H."/>
            <person name="Puls J."/>
        </authorList>
    </citation>
    <scope>FUNCTION</scope>
    <source>
        <strain>ATCC 56765 / Rut C-30</strain>
    </source>
</reference>
<reference key="3">
    <citation type="journal article" date="1991" name="Biotechnol. Appl. Biochem.">
        <title>Purification and properties of two acetylxylan esterases of Trichoderma reesei.</title>
        <authorList>
            <person name="Sundberg M."/>
            <person name="Poutanen K."/>
        </authorList>
    </citation>
    <scope>CHARACTERIZATION</scope>
    <source>
        <strain>ATCC 56765 / Rut C-30</strain>
    </source>
</reference>
<reference key="4">
    <citation type="journal article" date="1998" name="Acta Crystallogr. D">
        <title>Crystallization and preliminary X-ray diffraction studies of the catalytic core of acetyl xylan esterase from Trichoderma reesei.</title>
        <authorList>
            <person name="Hakulinen N."/>
            <person name="Tenkanen M."/>
            <person name="Rouvinen J."/>
        </authorList>
    </citation>
    <scope>X-RAY CRYSTALLOGRAPHY (2.3 ANGSTROMS) OF 32-238</scope>
    <scope>PYROGLUTAMATE FORMATION AT GLN-32</scope>
    <scope>IDENTIFICATION BY MASS SPECTROMETRY</scope>
</reference>
<reference key="5">
    <citation type="journal article" date="2000" name="J. Struct. Biol.">
        <title>Three-dimensional structure of the catalytic core of acetylxylan esterase from Trichoderma reesei: insights into the deacetylation mechanism.</title>
        <authorList>
            <person name="Hakulinen N."/>
            <person name="Tenkanen M."/>
            <person name="Rouvinen J."/>
        </authorList>
    </citation>
    <scope>X-RAY CRYSTALLOGRAPHY (1.9 ANGSTROMS) OF 32-238</scope>
</reference>
<accession>Q99034</accession>
<evidence type="ECO:0000250" key="1"/>
<evidence type="ECO:0000255" key="2"/>
<evidence type="ECO:0000255" key="3">
    <source>
        <dbReference type="PROSITE-ProRule" id="PRU00597"/>
    </source>
</evidence>
<evidence type="ECO:0000256" key="4">
    <source>
        <dbReference type="SAM" id="MobiDB-lite"/>
    </source>
</evidence>
<evidence type="ECO:0000269" key="5">
    <source>
    </source>
</evidence>
<evidence type="ECO:0000269" key="6">
    <source ref="2"/>
</evidence>
<evidence type="ECO:0000305" key="7"/>
<evidence type="ECO:0007829" key="8">
    <source>
        <dbReference type="PDB" id="1QOZ"/>
    </source>
</evidence>
<sequence>MPSVKETLTLLLSQAFLATGSPVDGETVVKRQCPAIHVFGARETTVSQGYGSSATVVNLVIQAHPGTTSEAIVYPACGGQASCGGISYANSVVNGTNAAAAAINNFHNSCPDTQLVLVGYSQGAQIFDNALCGGGDPGEGITNTAVPLTAGAVSAVKAAIFMGDPRNIHGLPYNVGTCTTQGFDARPAGFVCPSASKIKSYCDAADPYCCTGNDPNVHQGYGQEYGQQALAFINSQLSSGGSQPPGGGPTSTSRPTSTRTGSSPGPTQTHWGQCGGQGWTGPTQCESGTTCQVISQWYSQCL</sequence>
<name>AXE1_HYPJE</name>
<feature type="signal peptide" evidence="2">
    <location>
        <begin position="1"/>
        <end position="20"/>
    </location>
</feature>
<feature type="propeptide" id="PRO_0000020771" evidence="2">
    <location>
        <begin position="21"/>
        <end position="31"/>
    </location>
</feature>
<feature type="chain" id="PRO_0000020772" description="Acetylxylan esterase">
    <location>
        <begin position="32"/>
        <end position="302"/>
    </location>
</feature>
<feature type="domain" description="CBM1" evidence="3">
    <location>
        <begin position="266"/>
        <end position="302"/>
    </location>
</feature>
<feature type="region of interest" description="Disordered" evidence="4">
    <location>
        <begin position="236"/>
        <end position="273"/>
    </location>
</feature>
<feature type="region of interest" description="Linker" evidence="1">
    <location>
        <begin position="244"/>
        <end position="266"/>
    </location>
</feature>
<feature type="compositionally biased region" description="Low complexity" evidence="4">
    <location>
        <begin position="250"/>
        <end position="269"/>
    </location>
</feature>
<feature type="active site" evidence="1">
    <location>
        <position position="121"/>
    </location>
</feature>
<feature type="modified residue" description="Pyrrolidone carboxylic acid" evidence="5">
    <location>
        <position position="32"/>
    </location>
</feature>
<feature type="glycosylation site" description="N-linked (GlcNAc...) asparagine" evidence="7">
    <location>
        <position position="94"/>
    </location>
</feature>
<feature type="disulfide bond" evidence="1">
    <location>
        <begin position="274"/>
        <end position="291"/>
    </location>
</feature>
<feature type="disulfide bond" evidence="1">
    <location>
        <begin position="285"/>
        <end position="301"/>
    </location>
</feature>
<feature type="strand" evidence="8">
    <location>
        <begin position="35"/>
        <end position="41"/>
    </location>
</feature>
<feature type="helix" evidence="8">
    <location>
        <begin position="51"/>
        <end position="53"/>
    </location>
</feature>
<feature type="helix" evidence="8">
    <location>
        <begin position="54"/>
        <end position="63"/>
    </location>
</feature>
<feature type="strand" evidence="8">
    <location>
        <begin position="67"/>
        <end position="71"/>
    </location>
</feature>
<feature type="helix" evidence="8">
    <location>
        <begin position="81"/>
        <end position="83"/>
    </location>
</feature>
<feature type="helix" evidence="8">
    <location>
        <begin position="88"/>
        <end position="109"/>
    </location>
</feature>
<feature type="strand" evidence="8">
    <location>
        <begin position="113"/>
        <end position="120"/>
    </location>
</feature>
<feature type="helix" evidence="8">
    <location>
        <begin position="122"/>
        <end position="132"/>
    </location>
</feature>
<feature type="helix" evidence="8">
    <location>
        <begin position="137"/>
        <end position="139"/>
    </location>
</feature>
<feature type="helix" evidence="8">
    <location>
        <begin position="150"/>
        <end position="155"/>
    </location>
</feature>
<feature type="strand" evidence="8">
    <location>
        <begin position="156"/>
        <end position="163"/>
    </location>
</feature>
<feature type="strand" evidence="8">
    <location>
        <begin position="174"/>
        <end position="177"/>
    </location>
</feature>
<feature type="helix" evidence="8">
    <location>
        <begin position="195"/>
        <end position="197"/>
    </location>
</feature>
<feature type="strand" evidence="8">
    <location>
        <begin position="198"/>
        <end position="201"/>
    </location>
</feature>
<feature type="strand" evidence="8">
    <location>
        <begin position="207"/>
        <end position="211"/>
    </location>
</feature>
<feature type="helix" evidence="8">
    <location>
        <begin position="215"/>
        <end position="219"/>
    </location>
</feature>
<feature type="helix" evidence="8">
    <location>
        <begin position="221"/>
        <end position="236"/>
    </location>
</feature>
<protein>
    <recommendedName>
        <fullName>Acetylxylan esterase</fullName>
        <ecNumber>3.1.1.72</ecNumber>
    </recommendedName>
</protein>
<dbReference type="EC" id="3.1.1.72"/>
<dbReference type="EMBL" id="Z69256">
    <property type="protein sequence ID" value="CAA93247.1"/>
    <property type="molecule type" value="mRNA"/>
</dbReference>
<dbReference type="PIR" id="S71334">
    <property type="entry name" value="S71334"/>
</dbReference>
<dbReference type="PDB" id="1QOZ">
    <property type="method" value="X-ray"/>
    <property type="resolution" value="1.90 A"/>
    <property type="chains" value="A/B=33-238"/>
</dbReference>
<dbReference type="PDBsum" id="1QOZ"/>
<dbReference type="SMR" id="Q99034"/>
<dbReference type="CAZy" id="CBM1">
    <property type="family name" value="Carbohydrate-Binding Module Family 1"/>
</dbReference>
<dbReference type="ESTHER" id="hypje-axylest">
    <property type="family name" value="Acetylxylan_esterase"/>
</dbReference>
<dbReference type="GlyCosmos" id="Q99034">
    <property type="glycosylation" value="1 site, No reported glycans"/>
</dbReference>
<dbReference type="KEGG" id="ag:CAA93247"/>
<dbReference type="VEuPathDB" id="FungiDB:TrQ_007363"/>
<dbReference type="OMA" id="FSCPNAD"/>
<dbReference type="BioCyc" id="MetaCyc:MONOMER-16372"/>
<dbReference type="BRENDA" id="3.1.1.72">
    <property type="organism ID" value="6451"/>
</dbReference>
<dbReference type="UniPathway" id="UPA00114"/>
<dbReference type="EvolutionaryTrace" id="Q99034"/>
<dbReference type="GO" id="GO:0005576">
    <property type="term" value="C:extracellular region"/>
    <property type="evidence" value="ECO:0007669"/>
    <property type="project" value="UniProtKB-SubCell"/>
</dbReference>
<dbReference type="GO" id="GO:0046555">
    <property type="term" value="F:acetylxylan esterase activity"/>
    <property type="evidence" value="ECO:0007669"/>
    <property type="project" value="UniProtKB-EC"/>
</dbReference>
<dbReference type="GO" id="GO:0030248">
    <property type="term" value="F:cellulose binding"/>
    <property type="evidence" value="ECO:0007669"/>
    <property type="project" value="InterPro"/>
</dbReference>
<dbReference type="GO" id="GO:0030245">
    <property type="term" value="P:cellulose catabolic process"/>
    <property type="evidence" value="ECO:0007669"/>
    <property type="project" value="UniProtKB-KW"/>
</dbReference>
<dbReference type="GO" id="GO:0045493">
    <property type="term" value="P:xylan catabolic process"/>
    <property type="evidence" value="ECO:0007669"/>
    <property type="project" value="UniProtKB-UniPathway"/>
</dbReference>
<dbReference type="Gene3D" id="3.40.50.1820">
    <property type="entry name" value="alpha/beta hydrolase"/>
    <property type="match status" value="1"/>
</dbReference>
<dbReference type="InterPro" id="IPR029058">
    <property type="entry name" value="AB_hydrolase_fold"/>
</dbReference>
<dbReference type="InterPro" id="IPR035971">
    <property type="entry name" value="CBD_sf"/>
</dbReference>
<dbReference type="InterPro" id="IPR000254">
    <property type="entry name" value="Cellulose-bd_dom_fun"/>
</dbReference>
<dbReference type="InterPro" id="IPR000675">
    <property type="entry name" value="Cutinase/axe"/>
</dbReference>
<dbReference type="PANTHER" id="PTHR33630:SF13">
    <property type="entry name" value="ACETYLXYLAN ESTERASE"/>
    <property type="match status" value="1"/>
</dbReference>
<dbReference type="PANTHER" id="PTHR33630">
    <property type="entry name" value="CUTINASE RV1984C-RELATED-RELATED"/>
    <property type="match status" value="1"/>
</dbReference>
<dbReference type="Pfam" id="PF00734">
    <property type="entry name" value="CBM_1"/>
    <property type="match status" value="1"/>
</dbReference>
<dbReference type="Pfam" id="PF01083">
    <property type="entry name" value="Cutinase"/>
    <property type="match status" value="1"/>
</dbReference>
<dbReference type="SMART" id="SM01110">
    <property type="entry name" value="Cutinase"/>
    <property type="match status" value="1"/>
</dbReference>
<dbReference type="SMART" id="SM00236">
    <property type="entry name" value="fCBD"/>
    <property type="match status" value="1"/>
</dbReference>
<dbReference type="SUPFAM" id="SSF53474">
    <property type="entry name" value="alpha/beta-Hydrolases"/>
    <property type="match status" value="1"/>
</dbReference>
<dbReference type="SUPFAM" id="SSF57180">
    <property type="entry name" value="Cellulose-binding domain"/>
    <property type="match status" value="1"/>
</dbReference>
<dbReference type="PROSITE" id="PS00562">
    <property type="entry name" value="CBM1_1"/>
    <property type="match status" value="1"/>
</dbReference>
<dbReference type="PROSITE" id="PS51164">
    <property type="entry name" value="CBM1_2"/>
    <property type="match status" value="1"/>
</dbReference>
<dbReference type="PROSITE" id="PS00120">
    <property type="entry name" value="LIPASE_SER"/>
    <property type="match status" value="1"/>
</dbReference>
<keyword id="KW-0002">3D-structure</keyword>
<keyword id="KW-0119">Carbohydrate metabolism</keyword>
<keyword id="KW-0136">Cellulose degradation</keyword>
<keyword id="KW-0165">Cleavage on pair of basic residues</keyword>
<keyword id="KW-0903">Direct protein sequencing</keyword>
<keyword id="KW-1015">Disulfide bond</keyword>
<keyword id="KW-0325">Glycoprotein</keyword>
<keyword id="KW-0378">Hydrolase</keyword>
<keyword id="KW-0624">Polysaccharide degradation</keyword>
<keyword id="KW-0873">Pyrrolidone carboxylic acid</keyword>
<keyword id="KW-0964">Secreted</keyword>
<keyword id="KW-0719">Serine esterase</keyword>
<keyword id="KW-0732">Signal</keyword>
<gene>
    <name type="primary">axe1</name>
</gene>
<proteinExistence type="evidence at protein level"/>
<comment type="function">
    <text evidence="6">Degrades acetylated xylans by cleaving acetyl side groups from the hetero-xylan backbone.</text>
</comment>
<comment type="catalytic activity">
    <reaction>
        <text>Deacetylation of xylans and xylo-oligosaccharides.</text>
        <dbReference type="EC" id="3.1.1.72"/>
    </reaction>
</comment>
<comment type="activity regulation">
    <text>Inhibited by phenylmethylsulfonyl flouride.</text>
</comment>
<comment type="pathway">
    <text>Glycan degradation; xylan degradation.</text>
</comment>
<comment type="subunit">
    <text>Monomer.</text>
</comment>
<comment type="subcellular location">
    <subcellularLocation>
        <location>Secreted</location>
    </subcellularLocation>
</comment>
<comment type="PTM">
    <text>Glycosylated.</text>
</comment>
<comment type="similarity">
    <text evidence="7">Belongs to the cutinase family. Acetylxylan esterase subfamily.</text>
</comment>